<reference key="1">
    <citation type="journal article" date="2004" name="Nature">
        <title>Genome evolution in yeasts.</title>
        <authorList>
            <person name="Dujon B."/>
            <person name="Sherman D."/>
            <person name="Fischer G."/>
            <person name="Durrens P."/>
            <person name="Casaregola S."/>
            <person name="Lafontaine I."/>
            <person name="de Montigny J."/>
            <person name="Marck C."/>
            <person name="Neuveglise C."/>
            <person name="Talla E."/>
            <person name="Goffard N."/>
            <person name="Frangeul L."/>
            <person name="Aigle M."/>
            <person name="Anthouard V."/>
            <person name="Babour A."/>
            <person name="Barbe V."/>
            <person name="Barnay S."/>
            <person name="Blanchin S."/>
            <person name="Beckerich J.-M."/>
            <person name="Beyne E."/>
            <person name="Bleykasten C."/>
            <person name="Boisrame A."/>
            <person name="Boyer J."/>
            <person name="Cattolico L."/>
            <person name="Confanioleri F."/>
            <person name="de Daruvar A."/>
            <person name="Despons L."/>
            <person name="Fabre E."/>
            <person name="Fairhead C."/>
            <person name="Ferry-Dumazet H."/>
            <person name="Groppi A."/>
            <person name="Hantraye F."/>
            <person name="Hennequin C."/>
            <person name="Jauniaux N."/>
            <person name="Joyet P."/>
            <person name="Kachouri R."/>
            <person name="Kerrest A."/>
            <person name="Koszul R."/>
            <person name="Lemaire M."/>
            <person name="Lesur I."/>
            <person name="Ma L."/>
            <person name="Muller H."/>
            <person name="Nicaud J.-M."/>
            <person name="Nikolski M."/>
            <person name="Oztas S."/>
            <person name="Ozier-Kalogeropoulos O."/>
            <person name="Pellenz S."/>
            <person name="Potier S."/>
            <person name="Richard G.-F."/>
            <person name="Straub M.-L."/>
            <person name="Suleau A."/>
            <person name="Swennen D."/>
            <person name="Tekaia F."/>
            <person name="Wesolowski-Louvel M."/>
            <person name="Westhof E."/>
            <person name="Wirth B."/>
            <person name="Zeniou-Meyer M."/>
            <person name="Zivanovic Y."/>
            <person name="Bolotin-Fukuhara M."/>
            <person name="Thierry A."/>
            <person name="Bouchier C."/>
            <person name="Caudron B."/>
            <person name="Scarpelli C."/>
            <person name="Gaillardin C."/>
            <person name="Weissenbach J."/>
            <person name="Wincker P."/>
            <person name="Souciet J.-L."/>
        </authorList>
    </citation>
    <scope>NUCLEOTIDE SEQUENCE [LARGE SCALE GENOMIC DNA]</scope>
    <source>
        <strain>CLIB 122 / E 150</strain>
    </source>
</reference>
<dbReference type="EC" id="2.5.1.61"/>
<dbReference type="EMBL" id="CR382132">
    <property type="protein sequence ID" value="CAG78727.1"/>
    <property type="molecule type" value="Genomic_DNA"/>
</dbReference>
<dbReference type="RefSeq" id="XP_505915.1">
    <property type="nucleotide sequence ID" value="XM_505915.1"/>
</dbReference>
<dbReference type="SMR" id="Q6C097"/>
<dbReference type="FunCoup" id="Q6C097">
    <property type="interactions" value="677"/>
</dbReference>
<dbReference type="STRING" id="284591.Q6C097"/>
<dbReference type="EnsemblFungi" id="CAG78727">
    <property type="protein sequence ID" value="CAG78727"/>
    <property type="gene ID" value="YALI0_F26609g"/>
</dbReference>
<dbReference type="KEGG" id="yli:2908935"/>
<dbReference type="VEuPathDB" id="FungiDB:YALI0_F26609g"/>
<dbReference type="HOGENOM" id="CLU_019704_0_2_1"/>
<dbReference type="InParanoid" id="Q6C097"/>
<dbReference type="OMA" id="LWQANHI"/>
<dbReference type="OrthoDB" id="124174at4891"/>
<dbReference type="UniPathway" id="UPA00251">
    <property type="reaction ID" value="UER00319"/>
</dbReference>
<dbReference type="Proteomes" id="UP000001300">
    <property type="component" value="Chromosome F"/>
</dbReference>
<dbReference type="GO" id="GO:0005737">
    <property type="term" value="C:cytoplasm"/>
    <property type="evidence" value="ECO:0000318"/>
    <property type="project" value="GO_Central"/>
</dbReference>
<dbReference type="GO" id="GO:0004418">
    <property type="term" value="F:hydroxymethylbilane synthase activity"/>
    <property type="evidence" value="ECO:0000318"/>
    <property type="project" value="GO_Central"/>
</dbReference>
<dbReference type="GO" id="GO:0006783">
    <property type="term" value="P:heme biosynthetic process"/>
    <property type="evidence" value="ECO:0000318"/>
    <property type="project" value="GO_Central"/>
</dbReference>
<dbReference type="GO" id="GO:0006782">
    <property type="term" value="P:protoporphyrinogen IX biosynthetic process"/>
    <property type="evidence" value="ECO:0007669"/>
    <property type="project" value="UniProtKB-UniPathway"/>
</dbReference>
<dbReference type="CDD" id="cd13645">
    <property type="entry name" value="PBP2_HuPBGD_like"/>
    <property type="match status" value="1"/>
</dbReference>
<dbReference type="FunFam" id="3.30.160.40:FF:000002">
    <property type="entry name" value="Porphobilinogen deaminase"/>
    <property type="match status" value="1"/>
</dbReference>
<dbReference type="FunFam" id="3.40.190.10:FF:000005">
    <property type="entry name" value="Porphobilinogen deaminase"/>
    <property type="match status" value="1"/>
</dbReference>
<dbReference type="FunFam" id="3.40.190.10:FF:000086">
    <property type="entry name" value="Probable porphobilinogen deaminase"/>
    <property type="match status" value="1"/>
</dbReference>
<dbReference type="Gene3D" id="3.40.190.10">
    <property type="entry name" value="Periplasmic binding protein-like II"/>
    <property type="match status" value="2"/>
</dbReference>
<dbReference type="Gene3D" id="3.30.160.40">
    <property type="entry name" value="Porphobilinogen deaminase, C-terminal domain"/>
    <property type="match status" value="1"/>
</dbReference>
<dbReference type="InterPro" id="IPR000860">
    <property type="entry name" value="HemC"/>
</dbReference>
<dbReference type="InterPro" id="IPR022419">
    <property type="entry name" value="Porphobilin_deaminase_cofac_BS"/>
</dbReference>
<dbReference type="InterPro" id="IPR022417">
    <property type="entry name" value="Porphobilin_deaminase_N"/>
</dbReference>
<dbReference type="InterPro" id="IPR022418">
    <property type="entry name" value="Porphobilinogen_deaminase_C"/>
</dbReference>
<dbReference type="InterPro" id="IPR036803">
    <property type="entry name" value="Porphobilinogen_deaminase_C_sf"/>
</dbReference>
<dbReference type="NCBIfam" id="TIGR00212">
    <property type="entry name" value="hemC"/>
    <property type="match status" value="1"/>
</dbReference>
<dbReference type="PANTHER" id="PTHR11557">
    <property type="entry name" value="PORPHOBILINOGEN DEAMINASE"/>
    <property type="match status" value="1"/>
</dbReference>
<dbReference type="PANTHER" id="PTHR11557:SF0">
    <property type="entry name" value="PORPHOBILINOGEN DEAMINASE"/>
    <property type="match status" value="1"/>
</dbReference>
<dbReference type="Pfam" id="PF01379">
    <property type="entry name" value="Porphobil_deam"/>
    <property type="match status" value="1"/>
</dbReference>
<dbReference type="Pfam" id="PF03900">
    <property type="entry name" value="Porphobil_deamC"/>
    <property type="match status" value="1"/>
</dbReference>
<dbReference type="PIRSF" id="PIRSF001438">
    <property type="entry name" value="4pyrrol_synth_OHMeBilane_synth"/>
    <property type="match status" value="1"/>
</dbReference>
<dbReference type="PRINTS" id="PR00151">
    <property type="entry name" value="PORPHBDMNASE"/>
</dbReference>
<dbReference type="SUPFAM" id="SSF53850">
    <property type="entry name" value="Periplasmic binding protein-like II"/>
    <property type="match status" value="1"/>
</dbReference>
<dbReference type="SUPFAM" id="SSF54782">
    <property type="entry name" value="Porphobilinogen deaminase (hydroxymethylbilane synthase), C-terminal domain"/>
    <property type="match status" value="1"/>
</dbReference>
<dbReference type="PROSITE" id="PS00533">
    <property type="entry name" value="PORPHOBILINOGEN_DEAM"/>
    <property type="match status" value="1"/>
</dbReference>
<proteinExistence type="inferred from homology"/>
<comment type="function">
    <text evidence="1">Tetrapolymerization of the monopyrrole PBG into the hydroxymethylbilane pre-uroporphyrinogen in several discrete steps.</text>
</comment>
<comment type="catalytic activity">
    <reaction>
        <text>4 porphobilinogen + H2O = hydroxymethylbilane + 4 NH4(+)</text>
        <dbReference type="Rhea" id="RHEA:13185"/>
        <dbReference type="ChEBI" id="CHEBI:15377"/>
        <dbReference type="ChEBI" id="CHEBI:28938"/>
        <dbReference type="ChEBI" id="CHEBI:57845"/>
        <dbReference type="ChEBI" id="CHEBI:58126"/>
        <dbReference type="EC" id="2.5.1.61"/>
    </reaction>
</comment>
<comment type="cofactor">
    <cofactor evidence="1">
        <name>dipyrromethane</name>
        <dbReference type="ChEBI" id="CHEBI:60342"/>
    </cofactor>
    <text evidence="1">Binds 1 dipyrromethane group covalently.</text>
</comment>
<comment type="pathway">
    <text>Porphyrin-containing compound metabolism; protoporphyrin-IX biosynthesis; coproporphyrinogen-III from 5-aminolevulinate: step 2/4.</text>
</comment>
<comment type="miscellaneous">
    <text>The porphobilinogen subunits are added to the dipyrromethan group.</text>
</comment>
<comment type="similarity">
    <text evidence="2">Belongs to the HMBS family.</text>
</comment>
<feature type="chain" id="PRO_0000143044" description="Porphobilinogen deaminase">
    <location>
        <begin position="1"/>
        <end position="338"/>
    </location>
</feature>
<feature type="modified residue" description="S-(dipyrrolylmethanemethyl)cysteine" evidence="1">
    <location>
        <position position="265"/>
    </location>
</feature>
<organism>
    <name type="scientific">Yarrowia lipolytica (strain CLIB 122 / E 150)</name>
    <name type="common">Yeast</name>
    <name type="synonym">Candida lipolytica</name>
    <dbReference type="NCBI Taxonomy" id="284591"/>
    <lineage>
        <taxon>Eukaryota</taxon>
        <taxon>Fungi</taxon>
        <taxon>Dikarya</taxon>
        <taxon>Ascomycota</taxon>
        <taxon>Saccharomycotina</taxon>
        <taxon>Dipodascomycetes</taxon>
        <taxon>Dipodascales</taxon>
        <taxon>Dipodascales incertae sedis</taxon>
        <taxon>Yarrowia</taxon>
    </lineage>
</organism>
<keyword id="KW-0350">Heme biosynthesis</keyword>
<keyword id="KW-0627">Porphyrin biosynthesis</keyword>
<keyword id="KW-1185">Reference proteome</keyword>
<keyword id="KW-0808">Transferase</keyword>
<gene>
    <name type="primary">HEM3</name>
    <name type="ordered locus">YALI0F26609g</name>
</gene>
<name>HEM3_YARLI</name>
<protein>
    <recommendedName>
        <fullName>Porphobilinogen deaminase</fullName>
        <shortName>PBG</shortName>
        <ecNumber>2.5.1.61</ecNumber>
    </recommendedName>
    <alternativeName>
        <fullName>Hydroxymethylbilane synthase</fullName>
        <shortName>HMBS</shortName>
    </alternativeName>
    <alternativeName>
        <fullName>Pre-uroporphyrinogen synthase</fullName>
    </alternativeName>
</protein>
<accession>Q6C097</accession>
<evidence type="ECO:0000250" key="1"/>
<evidence type="ECO:0000305" key="2"/>
<sequence length="338" mass="36947">MSVEERPVIFDDQSELPKVFVGGRKSKLALVQTQHVAAMLKKVHPDYSFPVLGLTTLGDQVQSKPLYSFDGKALWTKELETLLLEKVPGFDQQDIIVHSLKDMPTVLPDGCELGAILTREDPRDALVMAAGSPYKTLADLPAGSVVGTSSIRRSAQLKKSYPGLVYESVRGNVGTRLSKLDDPETPYKCLILAAAGLKRLDLGDRITGYLQKPDMLHAVGQGALGLEIRQGDEKTKKILEAIYDKESTLCCLAERAVMRTLEGGCSVPIGVETKYENGKLTLDAIVVSVEGTEFVECTQVRAVEENWEAEQLGKDVAEQLVKDGAKKILDAIHLENIK</sequence>